<protein>
    <recommendedName>
        <fullName evidence="1">Ribonuclease PH</fullName>
        <shortName evidence="1">RNase PH</shortName>
        <ecNumber evidence="1">2.7.7.56</ecNumber>
    </recommendedName>
    <alternativeName>
        <fullName evidence="1">tRNA nucleotidyltransferase</fullName>
    </alternativeName>
</protein>
<reference key="1">
    <citation type="journal article" date="2009" name="Nat. Genet.">
        <title>Comparative genomic and phylogeographic analysis of Mycobacterium leprae.</title>
        <authorList>
            <person name="Monot M."/>
            <person name="Honore N."/>
            <person name="Garnier T."/>
            <person name="Zidane N."/>
            <person name="Sherafi D."/>
            <person name="Paniz-Mondolfi A."/>
            <person name="Matsuoka M."/>
            <person name="Taylor G.M."/>
            <person name="Donoghue H.D."/>
            <person name="Bouwman A."/>
            <person name="Mays S."/>
            <person name="Watson C."/>
            <person name="Lockwood D."/>
            <person name="Khamispour A."/>
            <person name="Dowlati Y."/>
            <person name="Jianping S."/>
            <person name="Rea T.H."/>
            <person name="Vera-Cabrera L."/>
            <person name="Stefani M.M."/>
            <person name="Banu S."/>
            <person name="Macdonald M."/>
            <person name="Sapkota B.R."/>
            <person name="Spencer J.S."/>
            <person name="Thomas J."/>
            <person name="Harshman K."/>
            <person name="Singh P."/>
            <person name="Busso P."/>
            <person name="Gattiker A."/>
            <person name="Rougemont J."/>
            <person name="Brennan P.J."/>
            <person name="Cole S.T."/>
        </authorList>
    </citation>
    <scope>NUCLEOTIDE SEQUENCE [LARGE SCALE GENOMIC DNA]</scope>
    <source>
        <strain>Br4923</strain>
    </source>
</reference>
<gene>
    <name evidence="1" type="primary">rph</name>
    <name type="ordered locus">MLBr01174</name>
</gene>
<accession>B8ZR59</accession>
<evidence type="ECO:0000255" key="1">
    <source>
        <dbReference type="HAMAP-Rule" id="MF_00564"/>
    </source>
</evidence>
<dbReference type="EC" id="2.7.7.56" evidence="1"/>
<dbReference type="EMBL" id="FM211192">
    <property type="protein sequence ID" value="CAR71269.1"/>
    <property type="molecule type" value="Genomic_DNA"/>
</dbReference>
<dbReference type="SMR" id="B8ZR59"/>
<dbReference type="KEGG" id="mlb:MLBr01174"/>
<dbReference type="HOGENOM" id="CLU_050858_0_0_11"/>
<dbReference type="Proteomes" id="UP000006900">
    <property type="component" value="Chromosome"/>
</dbReference>
<dbReference type="GO" id="GO:0000175">
    <property type="term" value="F:3'-5'-RNA exonuclease activity"/>
    <property type="evidence" value="ECO:0007669"/>
    <property type="project" value="UniProtKB-UniRule"/>
</dbReference>
<dbReference type="GO" id="GO:0000049">
    <property type="term" value="F:tRNA binding"/>
    <property type="evidence" value="ECO:0007669"/>
    <property type="project" value="UniProtKB-UniRule"/>
</dbReference>
<dbReference type="GO" id="GO:0009022">
    <property type="term" value="F:tRNA nucleotidyltransferase activity"/>
    <property type="evidence" value="ECO:0007669"/>
    <property type="project" value="UniProtKB-UniRule"/>
</dbReference>
<dbReference type="GO" id="GO:0016075">
    <property type="term" value="P:rRNA catabolic process"/>
    <property type="evidence" value="ECO:0007669"/>
    <property type="project" value="UniProtKB-UniRule"/>
</dbReference>
<dbReference type="GO" id="GO:0006364">
    <property type="term" value="P:rRNA processing"/>
    <property type="evidence" value="ECO:0007669"/>
    <property type="project" value="UniProtKB-KW"/>
</dbReference>
<dbReference type="GO" id="GO:0008033">
    <property type="term" value="P:tRNA processing"/>
    <property type="evidence" value="ECO:0007669"/>
    <property type="project" value="UniProtKB-UniRule"/>
</dbReference>
<dbReference type="CDD" id="cd11362">
    <property type="entry name" value="RNase_PH_bact"/>
    <property type="match status" value="1"/>
</dbReference>
<dbReference type="FunFam" id="3.30.230.70:FF:000003">
    <property type="entry name" value="Ribonuclease PH"/>
    <property type="match status" value="1"/>
</dbReference>
<dbReference type="Gene3D" id="3.30.230.70">
    <property type="entry name" value="GHMP Kinase, N-terminal domain"/>
    <property type="match status" value="1"/>
</dbReference>
<dbReference type="HAMAP" id="MF_00564">
    <property type="entry name" value="RNase_PH"/>
    <property type="match status" value="1"/>
</dbReference>
<dbReference type="InterPro" id="IPR001247">
    <property type="entry name" value="ExoRNase_PH_dom1"/>
</dbReference>
<dbReference type="InterPro" id="IPR015847">
    <property type="entry name" value="ExoRNase_PH_dom2"/>
</dbReference>
<dbReference type="InterPro" id="IPR036345">
    <property type="entry name" value="ExoRNase_PH_dom2_sf"/>
</dbReference>
<dbReference type="InterPro" id="IPR027408">
    <property type="entry name" value="PNPase/RNase_PH_dom_sf"/>
</dbReference>
<dbReference type="InterPro" id="IPR020568">
    <property type="entry name" value="Ribosomal_Su5_D2-typ_SF"/>
</dbReference>
<dbReference type="InterPro" id="IPR050080">
    <property type="entry name" value="RNase_PH"/>
</dbReference>
<dbReference type="InterPro" id="IPR002381">
    <property type="entry name" value="RNase_PH_bac-type"/>
</dbReference>
<dbReference type="InterPro" id="IPR018336">
    <property type="entry name" value="RNase_PH_CS"/>
</dbReference>
<dbReference type="NCBIfam" id="TIGR01966">
    <property type="entry name" value="RNasePH"/>
    <property type="match status" value="1"/>
</dbReference>
<dbReference type="PANTHER" id="PTHR11953">
    <property type="entry name" value="EXOSOME COMPLEX COMPONENT"/>
    <property type="match status" value="1"/>
</dbReference>
<dbReference type="PANTHER" id="PTHR11953:SF0">
    <property type="entry name" value="EXOSOME COMPLEX COMPONENT RRP41"/>
    <property type="match status" value="1"/>
</dbReference>
<dbReference type="Pfam" id="PF01138">
    <property type="entry name" value="RNase_PH"/>
    <property type="match status" value="1"/>
</dbReference>
<dbReference type="Pfam" id="PF03725">
    <property type="entry name" value="RNase_PH_C"/>
    <property type="match status" value="1"/>
</dbReference>
<dbReference type="SUPFAM" id="SSF55666">
    <property type="entry name" value="Ribonuclease PH domain 2-like"/>
    <property type="match status" value="1"/>
</dbReference>
<dbReference type="SUPFAM" id="SSF54211">
    <property type="entry name" value="Ribosomal protein S5 domain 2-like"/>
    <property type="match status" value="1"/>
</dbReference>
<dbReference type="PROSITE" id="PS01277">
    <property type="entry name" value="RIBONUCLEASE_PH"/>
    <property type="match status" value="1"/>
</dbReference>
<comment type="function">
    <text evidence="1">Phosphorolytic 3'-5' exoribonuclease that plays an important role in tRNA 3'-end maturation. Removes nucleotide residues following the 3'-CCA terminus of tRNAs; can also add nucleotides to the ends of RNA molecules by using nucleoside diphosphates as substrates, but this may not be physiologically important. Probably plays a role in initiation of 16S rRNA degradation (leading to ribosome degradation) during starvation.</text>
</comment>
<comment type="catalytic activity">
    <reaction evidence="1">
        <text>tRNA(n+1) + phosphate = tRNA(n) + a ribonucleoside 5'-diphosphate</text>
        <dbReference type="Rhea" id="RHEA:10628"/>
        <dbReference type="Rhea" id="RHEA-COMP:17343"/>
        <dbReference type="Rhea" id="RHEA-COMP:17344"/>
        <dbReference type="ChEBI" id="CHEBI:43474"/>
        <dbReference type="ChEBI" id="CHEBI:57930"/>
        <dbReference type="ChEBI" id="CHEBI:173114"/>
        <dbReference type="EC" id="2.7.7.56"/>
    </reaction>
</comment>
<comment type="subunit">
    <text evidence="1">Homohexameric ring arranged as a trimer of dimers.</text>
</comment>
<comment type="similarity">
    <text evidence="1">Belongs to the RNase PH family.</text>
</comment>
<organism>
    <name type="scientific">Mycobacterium leprae (strain Br4923)</name>
    <dbReference type="NCBI Taxonomy" id="561304"/>
    <lineage>
        <taxon>Bacteria</taxon>
        <taxon>Bacillati</taxon>
        <taxon>Actinomycetota</taxon>
        <taxon>Actinomycetes</taxon>
        <taxon>Mycobacteriales</taxon>
        <taxon>Mycobacteriaceae</taxon>
        <taxon>Mycobacterium</taxon>
    </lineage>
</organism>
<name>RNPH_MYCLB</name>
<feature type="chain" id="PRO_1000146783" description="Ribonuclease PH">
    <location>
        <begin position="1"/>
        <end position="259"/>
    </location>
</feature>
<feature type="binding site" evidence="1">
    <location>
        <position position="88"/>
    </location>
    <ligand>
        <name>phosphate</name>
        <dbReference type="ChEBI" id="CHEBI:43474"/>
        <note>substrate</note>
    </ligand>
</feature>
<feature type="binding site" evidence="1">
    <location>
        <begin position="126"/>
        <end position="128"/>
    </location>
    <ligand>
        <name>phosphate</name>
        <dbReference type="ChEBI" id="CHEBI:43474"/>
        <note>substrate</note>
    </ligand>
</feature>
<keyword id="KW-0548">Nucleotidyltransferase</keyword>
<keyword id="KW-0694">RNA-binding</keyword>
<keyword id="KW-0698">rRNA processing</keyword>
<keyword id="KW-0808">Transferase</keyword>
<keyword id="KW-0819">tRNA processing</keyword>
<keyword id="KW-0820">tRNA-binding</keyword>
<sequence length="259" mass="27365">MSTRADGRLDDELRAVVITRGFTEHPAGSVLIEFGHTKVMCTASPTEGVPRWRKGSGKGWLTAEYAMLPSATHTRSERESVKGRLSGRTQEISRLIGRSLRACIDLAALGENTIAVDCDVLQADGGTRTAAVTGAYVALADAVTYLSAAGRLLDPRPLSCAIAAVSVGVVDGRIRVDLSYEEDSRAEVDMNVIATDTGTLVEIQGTGEGATFPRSTLDKLLDMALGACDKLFVAQRDALALPYQGMSPEGPPPPKAFGS</sequence>
<proteinExistence type="inferred from homology"/>